<feature type="chain" id="PRO_1000142551" description="Large ribosomal subunit protein bL25">
    <location>
        <begin position="1"/>
        <end position="208"/>
    </location>
</feature>
<feature type="region of interest" description="Disordered" evidence="2">
    <location>
        <begin position="186"/>
        <end position="208"/>
    </location>
</feature>
<feature type="compositionally biased region" description="Low complexity" evidence="2">
    <location>
        <begin position="186"/>
        <end position="201"/>
    </location>
</feature>
<comment type="function">
    <text evidence="1">This is one of the proteins that binds to the 5S RNA in the ribosome where it forms part of the central protuberance.</text>
</comment>
<comment type="subunit">
    <text evidence="1">Part of the 50S ribosomal subunit; part of the 5S rRNA/L5/L18/L25 subcomplex. Contacts the 5S rRNA. Binds to the 5S rRNA independently of L5 and L18.</text>
</comment>
<comment type="similarity">
    <text evidence="1">Belongs to the bacterial ribosomal protein bL25 family. CTC subfamily.</text>
</comment>
<proteinExistence type="inferred from homology"/>
<dbReference type="EMBL" id="CP001068">
    <property type="protein sequence ID" value="ACD25411.1"/>
    <property type="molecule type" value="Genomic_DNA"/>
</dbReference>
<dbReference type="SMR" id="B2UER5"/>
<dbReference type="STRING" id="402626.Rpic_0249"/>
<dbReference type="KEGG" id="rpi:Rpic_0249"/>
<dbReference type="eggNOG" id="COG1825">
    <property type="taxonomic scope" value="Bacteria"/>
</dbReference>
<dbReference type="HOGENOM" id="CLU_075939_0_1_4"/>
<dbReference type="GO" id="GO:0022625">
    <property type="term" value="C:cytosolic large ribosomal subunit"/>
    <property type="evidence" value="ECO:0007669"/>
    <property type="project" value="TreeGrafter"/>
</dbReference>
<dbReference type="GO" id="GO:0008097">
    <property type="term" value="F:5S rRNA binding"/>
    <property type="evidence" value="ECO:0007669"/>
    <property type="project" value="InterPro"/>
</dbReference>
<dbReference type="GO" id="GO:0003735">
    <property type="term" value="F:structural constituent of ribosome"/>
    <property type="evidence" value="ECO:0007669"/>
    <property type="project" value="InterPro"/>
</dbReference>
<dbReference type="GO" id="GO:0006412">
    <property type="term" value="P:translation"/>
    <property type="evidence" value="ECO:0007669"/>
    <property type="project" value="UniProtKB-UniRule"/>
</dbReference>
<dbReference type="CDD" id="cd00495">
    <property type="entry name" value="Ribosomal_L25_TL5_CTC"/>
    <property type="match status" value="1"/>
</dbReference>
<dbReference type="Gene3D" id="2.170.120.20">
    <property type="entry name" value="Ribosomal protein L25, beta domain"/>
    <property type="match status" value="1"/>
</dbReference>
<dbReference type="Gene3D" id="2.40.240.10">
    <property type="entry name" value="Ribosomal Protein L25, Chain P"/>
    <property type="match status" value="1"/>
</dbReference>
<dbReference type="HAMAP" id="MF_01336">
    <property type="entry name" value="Ribosomal_bL25"/>
    <property type="match status" value="1"/>
</dbReference>
<dbReference type="HAMAP" id="MF_01334">
    <property type="entry name" value="Ribosomal_bL25_CTC"/>
    <property type="match status" value="1"/>
</dbReference>
<dbReference type="InterPro" id="IPR020056">
    <property type="entry name" value="Rbsml_bL25/Gln-tRNA_synth_N"/>
</dbReference>
<dbReference type="InterPro" id="IPR011035">
    <property type="entry name" value="Ribosomal_bL25/Gln-tRNA_synth"/>
</dbReference>
<dbReference type="InterPro" id="IPR020057">
    <property type="entry name" value="Ribosomal_bL25_b-dom"/>
</dbReference>
<dbReference type="InterPro" id="IPR037121">
    <property type="entry name" value="Ribosomal_bL25_C"/>
</dbReference>
<dbReference type="InterPro" id="IPR001021">
    <property type="entry name" value="Ribosomal_bL25_long"/>
</dbReference>
<dbReference type="InterPro" id="IPR020055">
    <property type="entry name" value="Ribosomal_bL25_short"/>
</dbReference>
<dbReference type="InterPro" id="IPR029751">
    <property type="entry name" value="Ribosomal_L25_dom"/>
</dbReference>
<dbReference type="InterPro" id="IPR020930">
    <property type="entry name" value="Ribosomal_uL5_bac-type"/>
</dbReference>
<dbReference type="NCBIfam" id="TIGR00731">
    <property type="entry name" value="bL25_bact_ctc"/>
    <property type="match status" value="1"/>
</dbReference>
<dbReference type="NCBIfam" id="NF004128">
    <property type="entry name" value="PRK05618.1-2"/>
    <property type="match status" value="1"/>
</dbReference>
<dbReference type="NCBIfam" id="NF004130">
    <property type="entry name" value="PRK05618.1-5"/>
    <property type="match status" value="1"/>
</dbReference>
<dbReference type="NCBIfam" id="NF004612">
    <property type="entry name" value="PRK05943.1"/>
    <property type="match status" value="1"/>
</dbReference>
<dbReference type="PANTHER" id="PTHR33284">
    <property type="entry name" value="RIBOSOMAL PROTEIN L25/GLN-TRNA SYNTHETASE, ANTI-CODON-BINDING DOMAIN-CONTAINING PROTEIN"/>
    <property type="match status" value="1"/>
</dbReference>
<dbReference type="PANTHER" id="PTHR33284:SF1">
    <property type="entry name" value="RIBOSOMAL PROTEIN L25_GLN-TRNA SYNTHETASE, ANTI-CODON-BINDING DOMAIN-CONTAINING PROTEIN"/>
    <property type="match status" value="1"/>
</dbReference>
<dbReference type="Pfam" id="PF01386">
    <property type="entry name" value="Ribosomal_L25p"/>
    <property type="match status" value="1"/>
</dbReference>
<dbReference type="Pfam" id="PF14693">
    <property type="entry name" value="Ribosomal_TL5_C"/>
    <property type="match status" value="1"/>
</dbReference>
<dbReference type="SUPFAM" id="SSF50715">
    <property type="entry name" value="Ribosomal protein L25-like"/>
    <property type="match status" value="1"/>
</dbReference>
<organism>
    <name type="scientific">Ralstonia pickettii (strain 12J)</name>
    <dbReference type="NCBI Taxonomy" id="402626"/>
    <lineage>
        <taxon>Bacteria</taxon>
        <taxon>Pseudomonadati</taxon>
        <taxon>Pseudomonadota</taxon>
        <taxon>Betaproteobacteria</taxon>
        <taxon>Burkholderiales</taxon>
        <taxon>Burkholderiaceae</taxon>
        <taxon>Ralstonia</taxon>
    </lineage>
</organism>
<evidence type="ECO:0000255" key="1">
    <source>
        <dbReference type="HAMAP-Rule" id="MF_01334"/>
    </source>
</evidence>
<evidence type="ECO:0000256" key="2">
    <source>
        <dbReference type="SAM" id="MobiDB-lite"/>
    </source>
</evidence>
<evidence type="ECO:0000305" key="3"/>
<accession>B2UER5</accession>
<reference key="1">
    <citation type="submission" date="2008-05" db="EMBL/GenBank/DDBJ databases">
        <title>Complete sequence of chromosome 1 of Ralstonia pickettii 12J.</title>
        <authorList>
            <person name="Lucas S."/>
            <person name="Copeland A."/>
            <person name="Lapidus A."/>
            <person name="Glavina del Rio T."/>
            <person name="Dalin E."/>
            <person name="Tice H."/>
            <person name="Bruce D."/>
            <person name="Goodwin L."/>
            <person name="Pitluck S."/>
            <person name="Meincke L."/>
            <person name="Brettin T."/>
            <person name="Detter J.C."/>
            <person name="Han C."/>
            <person name="Kuske C.R."/>
            <person name="Schmutz J."/>
            <person name="Larimer F."/>
            <person name="Land M."/>
            <person name="Hauser L."/>
            <person name="Kyrpides N."/>
            <person name="Mikhailova N."/>
            <person name="Marsh T."/>
            <person name="Richardson P."/>
        </authorList>
    </citation>
    <scope>NUCLEOTIDE SEQUENCE [LARGE SCALE GENOMIC DNA]</scope>
    <source>
        <strain>12J</strain>
    </source>
</reference>
<sequence length="208" mass="22255">MKVVAFERSVQGTGASRRLRNSGKTPAIIYGAGAEPKLIELDHNALYHALKKEAFHSSILDIEVAGKVEKALLRDFQLHPFKQLVLHVDFQRVSAKEKIHVKVPLHFLNQETAPGVKLGHGIVNHILNDVEVSCLPADLPEFIEVDLGTLEIGQTLHIADLKLPKGVTILTHGGDENPAVANISVPAGEKSAAAEEGAAAAGEDKPAA</sequence>
<name>RL25_RALPJ</name>
<keyword id="KW-0687">Ribonucleoprotein</keyword>
<keyword id="KW-0689">Ribosomal protein</keyword>
<keyword id="KW-0694">RNA-binding</keyword>
<keyword id="KW-0699">rRNA-binding</keyword>
<gene>
    <name evidence="1" type="primary">rplY</name>
    <name evidence="1" type="synonym">ctc</name>
    <name type="ordered locus">Rpic_0249</name>
</gene>
<protein>
    <recommendedName>
        <fullName evidence="1">Large ribosomal subunit protein bL25</fullName>
    </recommendedName>
    <alternativeName>
        <fullName evidence="3">50S ribosomal protein L25</fullName>
    </alternativeName>
    <alternativeName>
        <fullName evidence="1">General stress protein CTC</fullName>
    </alternativeName>
</protein>